<feature type="chain" id="PRO_0000409696" description="DNA gyrase inhibitor">
    <location>
        <begin position="1"/>
        <end position="155"/>
    </location>
</feature>
<reference key="1">
    <citation type="journal article" date="2009" name="PLoS ONE">
        <title>Genome sequence of the versatile fish pathogen Edwardsiella tarda provides insights into its adaptation to broad host ranges and intracellular niches.</title>
        <authorList>
            <person name="Wang Q."/>
            <person name="Yang M."/>
            <person name="Xiao J."/>
            <person name="Wu H."/>
            <person name="Wang X."/>
            <person name="Lv Y."/>
            <person name="Xu L."/>
            <person name="Zheng H."/>
            <person name="Wang S."/>
            <person name="Zhao G."/>
            <person name="Liu Q."/>
            <person name="Zhang Y."/>
        </authorList>
    </citation>
    <scope>NUCLEOTIDE SEQUENCE [LARGE SCALE GENOMIC DNA]</scope>
    <source>
        <strain>EIB202 / CCTCC M208068</strain>
    </source>
</reference>
<evidence type="ECO:0000255" key="1">
    <source>
        <dbReference type="HAMAP-Rule" id="MF_01896"/>
    </source>
</evidence>
<proteinExistence type="inferred from homology"/>
<dbReference type="EMBL" id="CP001135">
    <property type="protein sequence ID" value="ACY83921.1"/>
    <property type="molecule type" value="Genomic_DNA"/>
</dbReference>
<dbReference type="RefSeq" id="WP_012847940.1">
    <property type="nucleotide sequence ID" value="NC_013508.1"/>
</dbReference>
<dbReference type="SMR" id="D0ZEW7"/>
<dbReference type="GeneID" id="72527946"/>
<dbReference type="KEGG" id="etr:ETAE_1076"/>
<dbReference type="HOGENOM" id="CLU_113664_3_2_6"/>
<dbReference type="OrthoDB" id="282744at2"/>
<dbReference type="Proteomes" id="UP000002634">
    <property type="component" value="Chromosome"/>
</dbReference>
<dbReference type="GO" id="GO:0005737">
    <property type="term" value="C:cytoplasm"/>
    <property type="evidence" value="ECO:0007669"/>
    <property type="project" value="UniProtKB-SubCell"/>
</dbReference>
<dbReference type="GO" id="GO:0008657">
    <property type="term" value="F:DNA topoisomerase type II (double strand cut, ATP-hydrolyzing) inhibitor activity"/>
    <property type="evidence" value="ECO:0007669"/>
    <property type="project" value="UniProtKB-UniRule"/>
</dbReference>
<dbReference type="Gene3D" id="3.20.80.10">
    <property type="entry name" value="Regulatory factor, effector binding domain"/>
    <property type="match status" value="1"/>
</dbReference>
<dbReference type="HAMAP" id="MF_01896">
    <property type="entry name" value="DNA_gyrase_inhibitor"/>
    <property type="match status" value="1"/>
</dbReference>
<dbReference type="InterPro" id="IPR010499">
    <property type="entry name" value="AraC_E-bd"/>
</dbReference>
<dbReference type="InterPro" id="IPR050908">
    <property type="entry name" value="DNA_gyrase_inhibitor"/>
</dbReference>
<dbReference type="InterPro" id="IPR024911">
    <property type="entry name" value="DNA_gyrase_inhibitor_GyrI"/>
</dbReference>
<dbReference type="InterPro" id="IPR029442">
    <property type="entry name" value="GyrI-like"/>
</dbReference>
<dbReference type="InterPro" id="IPR011256">
    <property type="entry name" value="Reg_factor_effector_dom_sf"/>
</dbReference>
<dbReference type="PANTHER" id="PTHR40055:SF2">
    <property type="entry name" value="DNA GYRASE INHIBITOR"/>
    <property type="match status" value="1"/>
</dbReference>
<dbReference type="PANTHER" id="PTHR40055">
    <property type="entry name" value="TRANSCRIPTIONAL REGULATOR YGIV-RELATED"/>
    <property type="match status" value="1"/>
</dbReference>
<dbReference type="Pfam" id="PF06445">
    <property type="entry name" value="GyrI-like"/>
    <property type="match status" value="1"/>
</dbReference>
<dbReference type="SMART" id="SM00871">
    <property type="entry name" value="AraC_E_bind"/>
    <property type="match status" value="1"/>
</dbReference>
<dbReference type="SUPFAM" id="SSF55136">
    <property type="entry name" value="Probable bacterial effector-binding domain"/>
    <property type="match status" value="1"/>
</dbReference>
<protein>
    <recommendedName>
        <fullName evidence="1">DNA gyrase inhibitor</fullName>
    </recommendedName>
</protein>
<sequence>MQVKIESLAAQPLFALRVQGPFAQSLGPGFERLMAWSTRHGLQGQWMALYYDNPREVAPEALRADVALTTATTALPSDGEASGIRWDTLAGGLYALAQVRVIDNDFATPWVALFDQALPASGYRPDGGPCFERYLSDGRASGEWLLELGVPVRKS</sequence>
<name>SBMC_EDWPI</name>
<gene>
    <name evidence="1" type="primary">sbmC</name>
    <name type="ordered locus">ETAE_1076</name>
</gene>
<comment type="function">
    <text evidence="1">Inhibits the supercoiling activity of DNA gyrase. Acts by inhibiting DNA gyrase at an early step, prior to (or at the step of) binding of DNA by the gyrase. It protects cells against toxins that target DNA gyrase, by inhibiting activity of these toxins and reducing the formation of lethal double-strand breaks in the cell.</text>
</comment>
<comment type="subunit">
    <text evidence="1">Interacts with DNA gyrase.</text>
</comment>
<comment type="subcellular location">
    <subcellularLocation>
        <location evidence="1">Cytoplasm</location>
    </subcellularLocation>
</comment>
<comment type="similarity">
    <text evidence="1">Belongs to the DNA gyrase inhibitor family.</text>
</comment>
<accession>D0ZEW7</accession>
<keyword id="KW-0963">Cytoplasm</keyword>
<keyword id="KW-1185">Reference proteome</keyword>
<keyword id="KW-0346">Stress response</keyword>
<organism>
    <name type="scientific">Edwardsiella piscicida</name>
    <dbReference type="NCBI Taxonomy" id="1263550"/>
    <lineage>
        <taxon>Bacteria</taxon>
        <taxon>Pseudomonadati</taxon>
        <taxon>Pseudomonadota</taxon>
        <taxon>Gammaproteobacteria</taxon>
        <taxon>Enterobacterales</taxon>
        <taxon>Hafniaceae</taxon>
        <taxon>Edwardsiella</taxon>
    </lineage>
</organism>